<evidence type="ECO:0000305" key="1"/>
<accession>P68934</accession>
<accession>P08387</accession>
<dbReference type="EMBL" id="M28830">
    <property type="protein sequence ID" value="AAA32331.1"/>
    <property type="molecule type" value="Genomic_DNA"/>
</dbReference>
<dbReference type="PIR" id="JS0194">
    <property type="entry name" value="WRBP12"/>
</dbReference>
<gene>
    <name type="primary">16.8</name>
</gene>
<organism>
    <name type="scientific">Bacillus phage phi15</name>
    <name type="common">Bacteriophage phi-15</name>
    <dbReference type="NCBI Taxonomy" id="10755"/>
    <lineage>
        <taxon>Viruses</taxon>
        <taxon>Duplodnaviria</taxon>
        <taxon>Heunggongvirae</taxon>
        <taxon>Uroviricota</taxon>
        <taxon>Caudoviricetes</taxon>
        <taxon>Salasmaviridae</taxon>
        <taxon>Picovirinae</taxon>
        <taxon>Salasvirus</taxon>
        <taxon>Salasvirus phi29</taxon>
    </lineage>
</organism>
<reference key="1">
    <citation type="journal article" date="1989" name="Gene">
        <title>Nucleotide sequence of the right early region of Bacillus phage phi 15 and comparison with related phages: reorganization of gene 17 during evolution.</title>
        <authorList>
            <person name="Benes V."/>
            <person name="Arnold L."/>
            <person name="Smrt J."/>
            <person name="Paces V."/>
        </authorList>
    </citation>
    <scope>NUCLEOTIDE SEQUENCE [GENOMIC DNA]</scope>
</reference>
<proteinExistence type="inferred from homology"/>
<comment type="similarity">
    <text evidence="1">Belongs to the phi29likevirus gp16.8 family.</text>
</comment>
<name>GP168_BPPH5</name>
<feature type="chain" id="PRO_0000106617" description="Gene product 16.8">
    <location>
        <begin position="1"/>
        <end position="105"/>
    </location>
</feature>
<sequence length="105" mass="12444">MIDIIVKEDKRLITVQTPEGDEVFYTLSFSDEHKLLKRSSARLRNNIYAIGVANIRWVLVDMDNMILSEYMHHVDILKDIDRKMRQLGYIVISEWQHANKKGTRR</sequence>
<organismHost>
    <name type="scientific">Bacillus subtilis</name>
    <dbReference type="NCBI Taxonomy" id="1423"/>
</organismHost>
<keyword id="KW-0244">Early protein</keyword>
<protein>
    <recommendedName>
        <fullName>Gene product 16.8</fullName>
        <shortName>gp16.8</shortName>
    </recommendedName>
    <alternativeName>
        <fullName>Protein p16.8</fullName>
    </alternativeName>
</protein>